<comment type="function">
    <text evidence="1">High affinity receptor for melatonin. Likely to mediate the reproductive and circadian actions of melatonin. The activity of this receptor is mediated by pertussis toxin sensitive G proteins that inhibit adenylate cyclase activity. Possibly involved in sleep induction, by melatonin activation of the potassium channel KCNMA1/BK and the dissociation of G-beta and G-gamma subunits, thereby decreasing synaptic transmission (By similarity).</text>
</comment>
<comment type="subcellular location">
    <subcellularLocation>
        <location>Cell membrane</location>
        <topology>Multi-pass membrane protein</topology>
    </subcellularLocation>
</comment>
<comment type="tissue specificity">
    <text>At least in the brain, more precisely in the pars tuberalis and the suprachiasmatic nucleus.</text>
</comment>
<comment type="similarity">
    <text evidence="3">Belongs to the G-protein coupled receptor 1 family.</text>
</comment>
<sequence length="156" mass="18214">CYICHSLKYDRIYSNKNSLCYVFLIWTLTLIAIMPNLQTGTLQYDPRIYSCTFTQSVSSAYTIALVVFHFVVPMIIVTFCYLRIWILVLQVRRRVKPDSKPKLKPQDFRNFVTMFVVFVLFALCWAPLNFIGLIVASDPATMAPRIPEWLFVASYY</sequence>
<evidence type="ECO:0000250" key="1">
    <source>
        <dbReference type="UniProtKB" id="Q61184"/>
    </source>
</evidence>
<evidence type="ECO:0000255" key="2"/>
<evidence type="ECO:0000255" key="3">
    <source>
        <dbReference type="PROSITE-ProRule" id="PRU00521"/>
    </source>
</evidence>
<gene>
    <name type="primary">Mtnr1a</name>
</gene>
<organism>
    <name type="scientific">Rattus norvegicus</name>
    <name type="common">Rat</name>
    <dbReference type="NCBI Taxonomy" id="10116"/>
    <lineage>
        <taxon>Eukaryota</taxon>
        <taxon>Metazoa</taxon>
        <taxon>Chordata</taxon>
        <taxon>Craniata</taxon>
        <taxon>Vertebrata</taxon>
        <taxon>Euteleostomi</taxon>
        <taxon>Mammalia</taxon>
        <taxon>Eutheria</taxon>
        <taxon>Euarchontoglires</taxon>
        <taxon>Glires</taxon>
        <taxon>Rodentia</taxon>
        <taxon>Myomorpha</taxon>
        <taxon>Muroidea</taxon>
        <taxon>Muridae</taxon>
        <taxon>Murinae</taxon>
        <taxon>Rattus</taxon>
    </lineage>
</organism>
<keyword id="KW-1003">Cell membrane</keyword>
<keyword id="KW-0297">G-protein coupled receptor</keyword>
<keyword id="KW-0472">Membrane</keyword>
<keyword id="KW-0675">Receptor</keyword>
<keyword id="KW-1185">Reference proteome</keyword>
<keyword id="KW-0807">Transducer</keyword>
<keyword id="KW-0812">Transmembrane</keyword>
<keyword id="KW-1133">Transmembrane helix</keyword>
<name>MTR1A_RAT</name>
<accession>P49218</accession>
<dbReference type="EMBL" id="U14409">
    <property type="protein sequence ID" value="AAA57191.1"/>
    <property type="molecule type" value="mRNA"/>
</dbReference>
<dbReference type="PIR" id="I62107">
    <property type="entry name" value="I62107"/>
</dbReference>
<dbReference type="SMR" id="P49218"/>
<dbReference type="FunCoup" id="P49218">
    <property type="interactions" value="32"/>
</dbReference>
<dbReference type="STRING" id="10116.ENSRNOP00000034328"/>
<dbReference type="BindingDB" id="P49218"/>
<dbReference type="PaxDb" id="10116-ENSRNOP00000034328"/>
<dbReference type="AGR" id="RGD:620797"/>
<dbReference type="RGD" id="620797">
    <property type="gene designation" value="Mtnr1a"/>
</dbReference>
<dbReference type="eggNOG" id="KOG3656">
    <property type="taxonomic scope" value="Eukaryota"/>
</dbReference>
<dbReference type="InParanoid" id="P49218"/>
<dbReference type="Proteomes" id="UP000002494">
    <property type="component" value="Unplaced"/>
</dbReference>
<dbReference type="GO" id="GO:0043025">
    <property type="term" value="C:neuronal cell body"/>
    <property type="evidence" value="ECO:0000314"/>
    <property type="project" value="RGD"/>
</dbReference>
<dbReference type="GO" id="GO:0005886">
    <property type="term" value="C:plasma membrane"/>
    <property type="evidence" value="ECO:0000266"/>
    <property type="project" value="RGD"/>
</dbReference>
<dbReference type="GO" id="GO:0043235">
    <property type="term" value="C:receptor complex"/>
    <property type="evidence" value="ECO:0000266"/>
    <property type="project" value="RGD"/>
</dbReference>
<dbReference type="GO" id="GO:0042562">
    <property type="term" value="F:hormone binding"/>
    <property type="evidence" value="ECO:0000266"/>
    <property type="project" value="RGD"/>
</dbReference>
<dbReference type="GO" id="GO:0008502">
    <property type="term" value="F:melatonin receptor activity"/>
    <property type="evidence" value="ECO:0000266"/>
    <property type="project" value="RGD"/>
</dbReference>
<dbReference type="GO" id="GO:0007193">
    <property type="term" value="P:adenylate cyclase-inhibiting G protein-coupled receptor signaling pathway"/>
    <property type="evidence" value="ECO:0000266"/>
    <property type="project" value="RGD"/>
</dbReference>
<dbReference type="GO" id="GO:0043010">
    <property type="term" value="P:camera-type eye development"/>
    <property type="evidence" value="ECO:0000270"/>
    <property type="project" value="RGD"/>
</dbReference>
<dbReference type="GO" id="GO:0007623">
    <property type="term" value="P:circadian rhythm"/>
    <property type="evidence" value="ECO:0000270"/>
    <property type="project" value="RGD"/>
</dbReference>
<dbReference type="GO" id="GO:0046676">
    <property type="term" value="P:negative regulation of insulin secretion"/>
    <property type="evidence" value="ECO:0000315"/>
    <property type="project" value="RGD"/>
</dbReference>
<dbReference type="FunFam" id="1.20.1070.10:FF:000557">
    <property type="entry name" value="Melatonin receptor type 1A"/>
    <property type="match status" value="1"/>
</dbReference>
<dbReference type="Gene3D" id="1.20.1070.10">
    <property type="entry name" value="Rhodopsin 7-helix transmembrane proteins"/>
    <property type="match status" value="1"/>
</dbReference>
<dbReference type="InterPro" id="IPR000276">
    <property type="entry name" value="GPCR_Rhodpsn"/>
</dbReference>
<dbReference type="InterPro" id="IPR017452">
    <property type="entry name" value="GPCR_Rhodpsn_7TM"/>
</dbReference>
<dbReference type="InterPro" id="IPR002278">
    <property type="entry name" value="Mel_1A/1B_rcpt"/>
</dbReference>
<dbReference type="InterPro" id="IPR000025">
    <property type="entry name" value="Melatonin_rcpt"/>
</dbReference>
<dbReference type="PANTHER" id="PTHR24228">
    <property type="entry name" value="B2 BRADYKININ RECEPTOR/ANGIOTENSIN II RECEPTOR"/>
    <property type="match status" value="1"/>
</dbReference>
<dbReference type="PANTHER" id="PTHR24228:SF53">
    <property type="entry name" value="MELATONIN RECEPTOR TYPE 1A"/>
    <property type="match status" value="1"/>
</dbReference>
<dbReference type="Pfam" id="PF00001">
    <property type="entry name" value="7tm_1"/>
    <property type="match status" value="1"/>
</dbReference>
<dbReference type="PRINTS" id="PR00237">
    <property type="entry name" value="GPCRRHODOPSN"/>
</dbReference>
<dbReference type="PRINTS" id="PR01149">
    <property type="entry name" value="MELATONIN1AR"/>
</dbReference>
<dbReference type="PRINTS" id="PR00857">
    <property type="entry name" value="MELATONINR"/>
</dbReference>
<dbReference type="SUPFAM" id="SSF81321">
    <property type="entry name" value="Family A G protein-coupled receptor-like"/>
    <property type="match status" value="1"/>
</dbReference>
<dbReference type="PROSITE" id="PS50262">
    <property type="entry name" value="G_PROTEIN_RECEP_F1_2"/>
    <property type="match status" value="1"/>
</dbReference>
<feature type="chain" id="PRO_0000069866" description="Melatonin receptor type 1A">
    <location>
        <begin position="1" status="less than"/>
        <end position="156" status="greater than"/>
    </location>
</feature>
<feature type="transmembrane region" description="Helical; Name=1" evidence="2">
    <location>
        <begin position="19"/>
        <end position="39"/>
    </location>
</feature>
<feature type="transmembrane region" description="Helical; Name=2" evidence="2">
    <location>
        <begin position="62"/>
        <end position="82"/>
    </location>
</feature>
<feature type="transmembrane region" description="Helical; Name=3" evidence="2">
    <location>
        <begin position="115"/>
        <end position="135"/>
    </location>
</feature>
<feature type="non-terminal residue">
    <location>
        <position position="1"/>
    </location>
</feature>
<feature type="non-terminal residue">
    <location>
        <position position="156"/>
    </location>
</feature>
<proteinExistence type="evidence at transcript level"/>
<reference key="1">
    <citation type="journal article" date="1994" name="Neuron">
        <title>Cloning and characterization of a mammalian melatonin receptor that mediates reproductive and circadian responses.</title>
        <authorList>
            <person name="Reppert S.M."/>
            <person name="Weaver D.R."/>
            <person name="Ebisawa T."/>
        </authorList>
    </citation>
    <scope>NUCLEOTIDE SEQUENCE [MRNA]</scope>
    <source>
        <strain>Sprague-Dawley</strain>
        <tissue>Hypothalamus</tissue>
        <tissue>Pituitary</tissue>
    </source>
</reference>
<protein>
    <recommendedName>
        <fullName>Melatonin receptor type 1A</fullName>
        <shortName>Mel-1A-R</shortName>
        <shortName>Mel1a receptor</shortName>
    </recommendedName>
</protein>